<name>OBG_SHEFN</name>
<reference key="1">
    <citation type="submission" date="2006-08" db="EMBL/GenBank/DDBJ databases">
        <title>Complete sequence of Shewanella frigidimarina NCIMB 400.</title>
        <authorList>
            <consortium name="US DOE Joint Genome Institute"/>
            <person name="Copeland A."/>
            <person name="Lucas S."/>
            <person name="Lapidus A."/>
            <person name="Barry K."/>
            <person name="Detter J.C."/>
            <person name="Glavina del Rio T."/>
            <person name="Hammon N."/>
            <person name="Israni S."/>
            <person name="Dalin E."/>
            <person name="Tice H."/>
            <person name="Pitluck S."/>
            <person name="Fredrickson J.K."/>
            <person name="Kolker E."/>
            <person name="McCuel L.A."/>
            <person name="DiChristina T."/>
            <person name="Nealson K.H."/>
            <person name="Newman D."/>
            <person name="Tiedje J.M."/>
            <person name="Zhou J."/>
            <person name="Romine M.F."/>
            <person name="Culley D.E."/>
            <person name="Serres M."/>
            <person name="Chertkov O."/>
            <person name="Brettin T."/>
            <person name="Bruce D."/>
            <person name="Han C."/>
            <person name="Tapia R."/>
            <person name="Gilna P."/>
            <person name="Schmutz J."/>
            <person name="Larimer F."/>
            <person name="Land M."/>
            <person name="Hauser L."/>
            <person name="Kyrpides N."/>
            <person name="Mikhailova N."/>
            <person name="Richardson P."/>
        </authorList>
    </citation>
    <scope>NUCLEOTIDE SEQUENCE [LARGE SCALE GENOMIC DNA]</scope>
    <source>
        <strain>NCIMB 400</strain>
    </source>
</reference>
<comment type="function">
    <text evidence="1">An essential GTPase which binds GTP, GDP and possibly (p)ppGpp with moderate affinity, with high nucleotide exchange rates and a fairly low GTP hydrolysis rate. Plays a role in control of the cell cycle, stress response, ribosome biogenesis and in those bacteria that undergo differentiation, in morphogenesis control.</text>
</comment>
<comment type="cofactor">
    <cofactor evidence="1">
        <name>Mg(2+)</name>
        <dbReference type="ChEBI" id="CHEBI:18420"/>
    </cofactor>
</comment>
<comment type="subunit">
    <text evidence="1">Monomer.</text>
</comment>
<comment type="subcellular location">
    <subcellularLocation>
        <location evidence="1">Cytoplasm</location>
    </subcellularLocation>
</comment>
<comment type="similarity">
    <text evidence="1">Belongs to the TRAFAC class OBG-HflX-like GTPase superfamily. OBG GTPase family.</text>
</comment>
<gene>
    <name evidence="1" type="primary">obg</name>
    <name type="ordered locus">Sfri_3087</name>
</gene>
<feature type="chain" id="PRO_0000386241" description="GTPase Obg">
    <location>
        <begin position="1"/>
        <end position="388"/>
    </location>
</feature>
<feature type="domain" description="Obg" evidence="2">
    <location>
        <begin position="1"/>
        <end position="159"/>
    </location>
</feature>
<feature type="domain" description="OBG-type G" evidence="1">
    <location>
        <begin position="160"/>
        <end position="333"/>
    </location>
</feature>
<feature type="binding site" evidence="1">
    <location>
        <begin position="166"/>
        <end position="173"/>
    </location>
    <ligand>
        <name>GTP</name>
        <dbReference type="ChEBI" id="CHEBI:37565"/>
    </ligand>
</feature>
<feature type="binding site" evidence="1">
    <location>
        <position position="173"/>
    </location>
    <ligand>
        <name>Mg(2+)</name>
        <dbReference type="ChEBI" id="CHEBI:18420"/>
    </ligand>
</feature>
<feature type="binding site" evidence="1">
    <location>
        <begin position="191"/>
        <end position="195"/>
    </location>
    <ligand>
        <name>GTP</name>
        <dbReference type="ChEBI" id="CHEBI:37565"/>
    </ligand>
</feature>
<feature type="binding site" evidence="1">
    <location>
        <position position="193"/>
    </location>
    <ligand>
        <name>Mg(2+)</name>
        <dbReference type="ChEBI" id="CHEBI:18420"/>
    </ligand>
</feature>
<feature type="binding site" evidence="1">
    <location>
        <begin position="213"/>
        <end position="216"/>
    </location>
    <ligand>
        <name>GTP</name>
        <dbReference type="ChEBI" id="CHEBI:37565"/>
    </ligand>
</feature>
<feature type="binding site" evidence="1">
    <location>
        <begin position="283"/>
        <end position="286"/>
    </location>
    <ligand>
        <name>GTP</name>
        <dbReference type="ChEBI" id="CHEBI:37565"/>
    </ligand>
</feature>
<feature type="binding site" evidence="1">
    <location>
        <begin position="314"/>
        <end position="316"/>
    </location>
    <ligand>
        <name>GTP</name>
        <dbReference type="ChEBI" id="CHEBI:37565"/>
    </ligand>
</feature>
<sequence length="388" mass="42752">MKFVDEANIRVEAGDGGSGCVSFRREKYVPDGGPDGGDGGDGGSVYLQANENLNTLIDYRFTRFHMAERGTNGRGRDCTGHGGSDLVLQVPVGTRAIDQETEESLGDLTVNGQKLLVAKGGFHGLGNTRFKSSTNRAPRQKTLGTPGEVRSIKLELLLLADVGLLGMPNAGKSTFIRSVSRATPKVADYPFTTLVPNLGVVNPRPGQSFVIADIPGLIEGAAEGAGLGIRFLKHLERCRMLLHIIDIEPIDGVDPVYSARAIVGELEKYSPKLAAKPRWLVFNKTDLLLDEEIQAKIDRIVKELDWQGDVYTMSAYNRTGTEELSIKMLDYIRSLPAIVEEITADADVEFKWDNYHSAEDENANENYDDDFDEDFDDDDYDVEVIYQR</sequence>
<keyword id="KW-0963">Cytoplasm</keyword>
<keyword id="KW-0342">GTP-binding</keyword>
<keyword id="KW-0378">Hydrolase</keyword>
<keyword id="KW-0460">Magnesium</keyword>
<keyword id="KW-0479">Metal-binding</keyword>
<keyword id="KW-0547">Nucleotide-binding</keyword>
<keyword id="KW-1185">Reference proteome</keyword>
<proteinExistence type="inferred from homology"/>
<protein>
    <recommendedName>
        <fullName evidence="1">GTPase Obg</fullName>
        <ecNumber evidence="1">3.6.5.-</ecNumber>
    </recommendedName>
    <alternativeName>
        <fullName evidence="1">GTP-binding protein Obg</fullName>
    </alternativeName>
</protein>
<evidence type="ECO:0000255" key="1">
    <source>
        <dbReference type="HAMAP-Rule" id="MF_01454"/>
    </source>
</evidence>
<evidence type="ECO:0000255" key="2">
    <source>
        <dbReference type="PROSITE-ProRule" id="PRU01231"/>
    </source>
</evidence>
<dbReference type="EC" id="3.6.5.-" evidence="1"/>
<dbReference type="EMBL" id="CP000447">
    <property type="protein sequence ID" value="ABI72924.1"/>
    <property type="molecule type" value="Genomic_DNA"/>
</dbReference>
<dbReference type="SMR" id="Q07YJ0"/>
<dbReference type="STRING" id="318167.Sfri_3087"/>
<dbReference type="KEGG" id="sfr:Sfri_3087"/>
<dbReference type="eggNOG" id="COG0536">
    <property type="taxonomic scope" value="Bacteria"/>
</dbReference>
<dbReference type="HOGENOM" id="CLU_011747_2_0_6"/>
<dbReference type="OrthoDB" id="9807318at2"/>
<dbReference type="Proteomes" id="UP000000684">
    <property type="component" value="Chromosome"/>
</dbReference>
<dbReference type="GO" id="GO:0005737">
    <property type="term" value="C:cytoplasm"/>
    <property type="evidence" value="ECO:0007669"/>
    <property type="project" value="UniProtKB-SubCell"/>
</dbReference>
<dbReference type="GO" id="GO:0005525">
    <property type="term" value="F:GTP binding"/>
    <property type="evidence" value="ECO:0007669"/>
    <property type="project" value="UniProtKB-UniRule"/>
</dbReference>
<dbReference type="GO" id="GO:0003924">
    <property type="term" value="F:GTPase activity"/>
    <property type="evidence" value="ECO:0007669"/>
    <property type="project" value="UniProtKB-UniRule"/>
</dbReference>
<dbReference type="GO" id="GO:0000287">
    <property type="term" value="F:magnesium ion binding"/>
    <property type="evidence" value="ECO:0007669"/>
    <property type="project" value="InterPro"/>
</dbReference>
<dbReference type="GO" id="GO:0042254">
    <property type="term" value="P:ribosome biogenesis"/>
    <property type="evidence" value="ECO:0007669"/>
    <property type="project" value="UniProtKB-UniRule"/>
</dbReference>
<dbReference type="CDD" id="cd01898">
    <property type="entry name" value="Obg"/>
    <property type="match status" value="1"/>
</dbReference>
<dbReference type="FunFam" id="2.70.210.12:FF:000001">
    <property type="entry name" value="GTPase Obg"/>
    <property type="match status" value="1"/>
</dbReference>
<dbReference type="Gene3D" id="2.70.210.12">
    <property type="entry name" value="GTP1/OBG domain"/>
    <property type="match status" value="1"/>
</dbReference>
<dbReference type="Gene3D" id="3.40.50.300">
    <property type="entry name" value="P-loop containing nucleotide triphosphate hydrolases"/>
    <property type="match status" value="1"/>
</dbReference>
<dbReference type="HAMAP" id="MF_01454">
    <property type="entry name" value="GTPase_Obg"/>
    <property type="match status" value="1"/>
</dbReference>
<dbReference type="InterPro" id="IPR031167">
    <property type="entry name" value="G_OBG"/>
</dbReference>
<dbReference type="InterPro" id="IPR006073">
    <property type="entry name" value="GTP-bd"/>
</dbReference>
<dbReference type="InterPro" id="IPR014100">
    <property type="entry name" value="GTP-bd_Obg/CgtA"/>
</dbReference>
<dbReference type="InterPro" id="IPR006074">
    <property type="entry name" value="GTP1-OBG_CS"/>
</dbReference>
<dbReference type="InterPro" id="IPR006169">
    <property type="entry name" value="GTP1_OBG_dom"/>
</dbReference>
<dbReference type="InterPro" id="IPR036726">
    <property type="entry name" value="GTP1_OBG_dom_sf"/>
</dbReference>
<dbReference type="InterPro" id="IPR045086">
    <property type="entry name" value="OBG_GTPase"/>
</dbReference>
<dbReference type="InterPro" id="IPR027417">
    <property type="entry name" value="P-loop_NTPase"/>
</dbReference>
<dbReference type="NCBIfam" id="TIGR02729">
    <property type="entry name" value="Obg_CgtA"/>
    <property type="match status" value="1"/>
</dbReference>
<dbReference type="NCBIfam" id="NF008955">
    <property type="entry name" value="PRK12297.1"/>
    <property type="match status" value="1"/>
</dbReference>
<dbReference type="NCBIfam" id="NF008956">
    <property type="entry name" value="PRK12299.1"/>
    <property type="match status" value="1"/>
</dbReference>
<dbReference type="PANTHER" id="PTHR11702">
    <property type="entry name" value="DEVELOPMENTALLY REGULATED GTP-BINDING PROTEIN-RELATED"/>
    <property type="match status" value="1"/>
</dbReference>
<dbReference type="PANTHER" id="PTHR11702:SF31">
    <property type="entry name" value="MITOCHONDRIAL RIBOSOME-ASSOCIATED GTPASE 2"/>
    <property type="match status" value="1"/>
</dbReference>
<dbReference type="Pfam" id="PF01018">
    <property type="entry name" value="GTP1_OBG"/>
    <property type="match status" value="1"/>
</dbReference>
<dbReference type="Pfam" id="PF01926">
    <property type="entry name" value="MMR_HSR1"/>
    <property type="match status" value="1"/>
</dbReference>
<dbReference type="PIRSF" id="PIRSF002401">
    <property type="entry name" value="GTP_bd_Obg/CgtA"/>
    <property type="match status" value="1"/>
</dbReference>
<dbReference type="PRINTS" id="PR00326">
    <property type="entry name" value="GTP1OBG"/>
</dbReference>
<dbReference type="SUPFAM" id="SSF82051">
    <property type="entry name" value="Obg GTP-binding protein N-terminal domain"/>
    <property type="match status" value="1"/>
</dbReference>
<dbReference type="SUPFAM" id="SSF52540">
    <property type="entry name" value="P-loop containing nucleoside triphosphate hydrolases"/>
    <property type="match status" value="1"/>
</dbReference>
<dbReference type="PROSITE" id="PS51710">
    <property type="entry name" value="G_OBG"/>
    <property type="match status" value="1"/>
</dbReference>
<dbReference type="PROSITE" id="PS00905">
    <property type="entry name" value="GTP1_OBG"/>
    <property type="match status" value="1"/>
</dbReference>
<dbReference type="PROSITE" id="PS51883">
    <property type="entry name" value="OBG"/>
    <property type="match status" value="1"/>
</dbReference>
<accession>Q07YJ0</accession>
<organism>
    <name type="scientific">Shewanella frigidimarina (strain NCIMB 400)</name>
    <dbReference type="NCBI Taxonomy" id="318167"/>
    <lineage>
        <taxon>Bacteria</taxon>
        <taxon>Pseudomonadati</taxon>
        <taxon>Pseudomonadota</taxon>
        <taxon>Gammaproteobacteria</taxon>
        <taxon>Alteromonadales</taxon>
        <taxon>Shewanellaceae</taxon>
        <taxon>Shewanella</taxon>
    </lineage>
</organism>